<sequence length="99" mass="10946">MMNMQNMMKQAQKLQKQMEQKQADLAAMQFTGKSAQDLVTATFTGDKKLVGIDFKEAVVDPEDVETLQDMTTQAINDALTQIDEATKKTLGAFAGKLPF</sequence>
<keyword id="KW-0963">Cytoplasm</keyword>
<keyword id="KW-0238">DNA-binding</keyword>
<reference key="1">
    <citation type="journal article" date="2005" name="J. Infect. Dis.">
        <title>Genome sequence of a serotype M28 strain of group A Streptococcus: potential new insights into puerperal sepsis and bacterial disease specificity.</title>
        <authorList>
            <person name="Green N.M."/>
            <person name="Zhang S."/>
            <person name="Porcella S.F."/>
            <person name="Nagiec M.J."/>
            <person name="Barbian K.D."/>
            <person name="Beres S.B."/>
            <person name="Lefebvre R.B."/>
            <person name="Musser J.M."/>
        </authorList>
    </citation>
    <scope>NUCLEOTIDE SEQUENCE [LARGE SCALE GENOMIC DNA]</scope>
    <source>
        <strain>MGAS6180</strain>
    </source>
</reference>
<proteinExistence type="inferred from homology"/>
<feature type="chain" id="PRO_1000003843" description="Nucleoid-associated protein M28_Spy1568">
    <location>
        <begin position="1"/>
        <end position="99"/>
    </location>
</feature>
<protein>
    <recommendedName>
        <fullName evidence="1">Nucleoid-associated protein M28_Spy1568</fullName>
    </recommendedName>
</protein>
<accession>Q48RI2</accession>
<organism>
    <name type="scientific">Streptococcus pyogenes serotype M28 (strain MGAS6180)</name>
    <dbReference type="NCBI Taxonomy" id="319701"/>
    <lineage>
        <taxon>Bacteria</taxon>
        <taxon>Bacillati</taxon>
        <taxon>Bacillota</taxon>
        <taxon>Bacilli</taxon>
        <taxon>Lactobacillales</taxon>
        <taxon>Streptococcaceae</taxon>
        <taxon>Streptococcus</taxon>
    </lineage>
</organism>
<name>Y1568_STRPM</name>
<comment type="function">
    <text evidence="1">Binds to DNA and alters its conformation. May be involved in regulation of gene expression, nucleoid organization and DNA protection.</text>
</comment>
<comment type="subunit">
    <text evidence="1">Homodimer.</text>
</comment>
<comment type="subcellular location">
    <subcellularLocation>
        <location evidence="1">Cytoplasm</location>
        <location evidence="1">Nucleoid</location>
    </subcellularLocation>
</comment>
<comment type="similarity">
    <text evidence="1">Belongs to the YbaB/EbfC family.</text>
</comment>
<dbReference type="EMBL" id="CP000056">
    <property type="protein sequence ID" value="AAX72678.1"/>
    <property type="molecule type" value="Genomic_DNA"/>
</dbReference>
<dbReference type="RefSeq" id="WP_002988205.1">
    <property type="nucleotide sequence ID" value="NC_007296.2"/>
</dbReference>
<dbReference type="SMR" id="Q48RI2"/>
<dbReference type="KEGG" id="spb:M28_Spy1568"/>
<dbReference type="HOGENOM" id="CLU_140930_1_1_9"/>
<dbReference type="GO" id="GO:0043590">
    <property type="term" value="C:bacterial nucleoid"/>
    <property type="evidence" value="ECO:0007669"/>
    <property type="project" value="UniProtKB-UniRule"/>
</dbReference>
<dbReference type="GO" id="GO:0005829">
    <property type="term" value="C:cytosol"/>
    <property type="evidence" value="ECO:0007669"/>
    <property type="project" value="TreeGrafter"/>
</dbReference>
<dbReference type="GO" id="GO:0003677">
    <property type="term" value="F:DNA binding"/>
    <property type="evidence" value="ECO:0007669"/>
    <property type="project" value="UniProtKB-UniRule"/>
</dbReference>
<dbReference type="Gene3D" id="3.30.1310.10">
    <property type="entry name" value="Nucleoid-associated protein YbaB-like domain"/>
    <property type="match status" value="1"/>
</dbReference>
<dbReference type="HAMAP" id="MF_00274">
    <property type="entry name" value="DNA_YbaB_EbfC"/>
    <property type="match status" value="1"/>
</dbReference>
<dbReference type="InterPro" id="IPR036894">
    <property type="entry name" value="YbaB-like_sf"/>
</dbReference>
<dbReference type="InterPro" id="IPR004401">
    <property type="entry name" value="YbaB/EbfC"/>
</dbReference>
<dbReference type="NCBIfam" id="TIGR00103">
    <property type="entry name" value="DNA_YbaB_EbfC"/>
    <property type="match status" value="1"/>
</dbReference>
<dbReference type="PANTHER" id="PTHR33449">
    <property type="entry name" value="NUCLEOID-ASSOCIATED PROTEIN YBAB"/>
    <property type="match status" value="1"/>
</dbReference>
<dbReference type="PANTHER" id="PTHR33449:SF1">
    <property type="entry name" value="NUCLEOID-ASSOCIATED PROTEIN YBAB"/>
    <property type="match status" value="1"/>
</dbReference>
<dbReference type="Pfam" id="PF02575">
    <property type="entry name" value="YbaB_DNA_bd"/>
    <property type="match status" value="1"/>
</dbReference>
<dbReference type="PIRSF" id="PIRSF004555">
    <property type="entry name" value="UCP004555"/>
    <property type="match status" value="1"/>
</dbReference>
<dbReference type="SUPFAM" id="SSF82607">
    <property type="entry name" value="YbaB-like"/>
    <property type="match status" value="1"/>
</dbReference>
<evidence type="ECO:0000255" key="1">
    <source>
        <dbReference type="HAMAP-Rule" id="MF_00274"/>
    </source>
</evidence>
<gene>
    <name type="ordered locus">M28_Spy1568</name>
</gene>